<gene>
    <name type="primary">cpeb3</name>
    <name type="ORF">TGas021m22.1</name>
</gene>
<comment type="function">
    <text evidence="1 4">Sequence-specific RNA-binding protein which acts as a translational repressor in the basal unstimulated state but, following neuronal stimulation, acts as a translational activator (By similarity). Does not bind to the cytoplasmic polyadenylation element (CPE), a uridine-rich sequence element within the mRNA 3'-UTR, but binds to a U-rich loop within a stem-loop structure (By similarity). Required for the consolidation and maintenance of hippocampal-based long term memory (By similarity). Inhibits differentiation of intermediate mesoderm from an early stage to inhibit pronephric differentiation but induce neural differentiation (PubMed:18472403).</text>
</comment>
<comment type="subunit">
    <text evidence="1">Following synaptic activity, forms amyloid-like oligomers (By similarity). Aggregation requires an intact actin cytoskeleton (By similarity).</text>
</comment>
<comment type="subcellular location">
    <subcellularLocation>
        <location evidence="1">Cytoplasm</location>
    </subcellularLocation>
    <subcellularLocation>
        <location evidence="1">Nucleus</location>
    </subcellularLocation>
    <subcellularLocation>
        <location evidence="1">Synapse</location>
    </subcellularLocation>
    <subcellularLocation>
        <location evidence="1">Cell projection</location>
        <location evidence="1">Dendrite</location>
    </subcellularLocation>
    <subcellularLocation>
        <location evidence="1">Postsynaptic density</location>
    </subcellularLocation>
    <text evidence="1">Predominantly cytoplasmic in unstimulated neurons but translocates to the nucleus following neuronal stimulation.</text>
</comment>
<comment type="tissue specificity">
    <text evidence="4">In embryos, expressed in the central nervous system, and intermediate and distal pronephric tubule segments of the embryonic kidney.</text>
</comment>
<comment type="domain">
    <text evidence="1">The N-terminal Gln-rich region is required for the formation of amyloid-like oligomers and for the stability of long-term potentiation and spatial memory.</text>
</comment>
<comment type="similarity">
    <text evidence="5">Belongs to the RRM CPEB family.</text>
</comment>
<proteinExistence type="evidence at transcript level"/>
<dbReference type="EMBL" id="CR926390">
    <property type="protein sequence ID" value="CAJ82507.1"/>
    <property type="molecule type" value="mRNA"/>
</dbReference>
<dbReference type="RefSeq" id="NP_001015925.1">
    <property type="nucleotide sequence ID" value="NM_001015925.2"/>
</dbReference>
<dbReference type="BMRB" id="Q28CH2"/>
<dbReference type="SMR" id="Q28CH2"/>
<dbReference type="FunCoup" id="Q28CH2">
    <property type="interactions" value="684"/>
</dbReference>
<dbReference type="STRING" id="8364.ENSXETP00000011081"/>
<dbReference type="PaxDb" id="8364-ENSXETP00000026614"/>
<dbReference type="GeneID" id="548679"/>
<dbReference type="KEGG" id="xtr:548679"/>
<dbReference type="AGR" id="Xenbase:XB-GENE-5716009"/>
<dbReference type="CTD" id="22849"/>
<dbReference type="Xenbase" id="XB-GENE-5716009">
    <property type="gene designation" value="cpeb3"/>
</dbReference>
<dbReference type="eggNOG" id="KOG0129">
    <property type="taxonomic scope" value="Eukaryota"/>
</dbReference>
<dbReference type="InParanoid" id="Q28CH2"/>
<dbReference type="OrthoDB" id="10033548at2759"/>
<dbReference type="Proteomes" id="UP000008143">
    <property type="component" value="Chromosome 7"/>
</dbReference>
<dbReference type="GO" id="GO:0097440">
    <property type="term" value="C:apical dendrite"/>
    <property type="evidence" value="ECO:0000250"/>
    <property type="project" value="UniProtKB"/>
</dbReference>
<dbReference type="GO" id="GO:0030014">
    <property type="term" value="C:CCR4-NOT complex"/>
    <property type="evidence" value="ECO:0000250"/>
    <property type="project" value="UniProtKB"/>
</dbReference>
<dbReference type="GO" id="GO:0005737">
    <property type="term" value="C:cytoplasm"/>
    <property type="evidence" value="ECO:0000250"/>
    <property type="project" value="UniProtKB"/>
</dbReference>
<dbReference type="GO" id="GO:0030425">
    <property type="term" value="C:dendrite"/>
    <property type="evidence" value="ECO:0000250"/>
    <property type="project" value="UniProtKB"/>
</dbReference>
<dbReference type="GO" id="GO:0043005">
    <property type="term" value="C:neuron projection"/>
    <property type="evidence" value="ECO:0000250"/>
    <property type="project" value="UniProtKB"/>
</dbReference>
<dbReference type="GO" id="GO:0005634">
    <property type="term" value="C:nucleus"/>
    <property type="evidence" value="ECO:0000250"/>
    <property type="project" value="UniProtKB"/>
</dbReference>
<dbReference type="GO" id="GO:0014069">
    <property type="term" value="C:postsynaptic density"/>
    <property type="evidence" value="ECO:0007669"/>
    <property type="project" value="UniProtKB-SubCell"/>
</dbReference>
<dbReference type="GO" id="GO:0045202">
    <property type="term" value="C:synapse"/>
    <property type="evidence" value="ECO:0000250"/>
    <property type="project" value="UniProtKB"/>
</dbReference>
<dbReference type="GO" id="GO:0035925">
    <property type="term" value="F:mRNA 3'-UTR AU-rich region binding"/>
    <property type="evidence" value="ECO:0000250"/>
    <property type="project" value="UniProtKB"/>
</dbReference>
<dbReference type="GO" id="GO:0003730">
    <property type="term" value="F:mRNA 3'-UTR binding"/>
    <property type="evidence" value="ECO:0000250"/>
    <property type="project" value="UniProtKB"/>
</dbReference>
<dbReference type="GO" id="GO:0000900">
    <property type="term" value="F:mRNA regulatory element binding translation repressor activity"/>
    <property type="evidence" value="ECO:0000250"/>
    <property type="project" value="UniProtKB"/>
</dbReference>
<dbReference type="GO" id="GO:0003723">
    <property type="term" value="F:RNA binding"/>
    <property type="evidence" value="ECO:0000250"/>
    <property type="project" value="UniProtKB"/>
</dbReference>
<dbReference type="GO" id="GO:0035613">
    <property type="term" value="F:RNA stem-loop binding"/>
    <property type="evidence" value="ECO:0000250"/>
    <property type="project" value="UniProtKB"/>
</dbReference>
<dbReference type="GO" id="GO:0008135">
    <property type="term" value="F:translation factor activity, RNA binding"/>
    <property type="evidence" value="ECO:0000250"/>
    <property type="project" value="UniProtKB"/>
</dbReference>
<dbReference type="GO" id="GO:0061158">
    <property type="term" value="P:3'-UTR-mediated mRNA destabilization"/>
    <property type="evidence" value="ECO:0000250"/>
    <property type="project" value="UniProtKB"/>
</dbReference>
<dbReference type="GO" id="GO:0030154">
    <property type="term" value="P:cell differentiation"/>
    <property type="evidence" value="ECO:0007669"/>
    <property type="project" value="UniProtKB-KW"/>
</dbReference>
<dbReference type="GO" id="GO:0071230">
    <property type="term" value="P:cellular response to amino acid stimulus"/>
    <property type="evidence" value="ECO:0000250"/>
    <property type="project" value="UniProtKB"/>
</dbReference>
<dbReference type="GO" id="GO:0007616">
    <property type="term" value="P:long-term memory"/>
    <property type="evidence" value="ECO:0000250"/>
    <property type="project" value="UniProtKB"/>
</dbReference>
<dbReference type="GO" id="GO:1900248">
    <property type="term" value="P:negative regulation of cytoplasmic translational elongation"/>
    <property type="evidence" value="ECO:0000250"/>
    <property type="project" value="UniProtKB"/>
</dbReference>
<dbReference type="GO" id="GO:0000122">
    <property type="term" value="P:negative regulation of transcription by RNA polymerase II"/>
    <property type="evidence" value="ECO:0000250"/>
    <property type="project" value="UniProtKB"/>
</dbReference>
<dbReference type="GO" id="GO:0017148">
    <property type="term" value="P:negative regulation of translation"/>
    <property type="evidence" value="ECO:0000250"/>
    <property type="project" value="UniProtKB"/>
</dbReference>
<dbReference type="GO" id="GO:0060999">
    <property type="term" value="P:positive regulation of dendritic spine development"/>
    <property type="evidence" value="ECO:0000250"/>
    <property type="project" value="UniProtKB"/>
</dbReference>
<dbReference type="GO" id="GO:1900153">
    <property type="term" value="P:positive regulation of nuclear-transcribed mRNA catabolic process, deadenylation-dependent decay"/>
    <property type="evidence" value="ECO:0000250"/>
    <property type="project" value="UniProtKB"/>
</dbReference>
<dbReference type="GO" id="GO:0060213">
    <property type="term" value="P:positive regulation of nuclear-transcribed mRNA poly(A) tail shortening"/>
    <property type="evidence" value="ECO:0000250"/>
    <property type="project" value="UniProtKB"/>
</dbReference>
<dbReference type="GO" id="GO:0045727">
    <property type="term" value="P:positive regulation of translation"/>
    <property type="evidence" value="ECO:0000250"/>
    <property type="project" value="UniProtKB"/>
</dbReference>
<dbReference type="GO" id="GO:0048793">
    <property type="term" value="P:pronephros development"/>
    <property type="evidence" value="ECO:0000315"/>
    <property type="project" value="UniProtKB"/>
</dbReference>
<dbReference type="GO" id="GO:0060998">
    <property type="term" value="P:regulation of dendritic spine development"/>
    <property type="evidence" value="ECO:0000250"/>
    <property type="project" value="UniProtKB"/>
</dbReference>
<dbReference type="GO" id="GO:0048167">
    <property type="term" value="P:regulation of synaptic plasticity"/>
    <property type="evidence" value="ECO:0000250"/>
    <property type="project" value="UniProtKB"/>
</dbReference>
<dbReference type="CDD" id="cd19757">
    <property type="entry name" value="Bbox1"/>
    <property type="match status" value="1"/>
</dbReference>
<dbReference type="CDD" id="cd12724">
    <property type="entry name" value="RRM1_CPEB2_like"/>
    <property type="match status" value="1"/>
</dbReference>
<dbReference type="CDD" id="cd12726">
    <property type="entry name" value="RRM2_CPEB2_like"/>
    <property type="match status" value="1"/>
</dbReference>
<dbReference type="FunFam" id="3.30.70.330:FF:000008">
    <property type="entry name" value="Cytoplasmic polyadenylation element-binding 2 isoform X2"/>
    <property type="match status" value="1"/>
</dbReference>
<dbReference type="FunFam" id="4.10.640.40:FF:000001">
    <property type="entry name" value="Cytoplasmic polyadenylation element-binding 2 isoform X2"/>
    <property type="match status" value="1"/>
</dbReference>
<dbReference type="FunFam" id="3.30.70.330:FF:000009">
    <property type="entry name" value="cytoplasmic polyadenylation element-binding protein 2 isoform X1"/>
    <property type="match status" value="1"/>
</dbReference>
<dbReference type="Gene3D" id="3.30.70.330">
    <property type="match status" value="2"/>
</dbReference>
<dbReference type="Gene3D" id="4.10.640.40">
    <property type="entry name" value="Cytoplasmic polyadenylation element-binding protein, ZZ domain"/>
    <property type="match status" value="1"/>
</dbReference>
<dbReference type="InterPro" id="IPR032296">
    <property type="entry name" value="CEBP_ZZ"/>
</dbReference>
<dbReference type="InterPro" id="IPR038446">
    <property type="entry name" value="CEBP_ZZ_sf"/>
</dbReference>
<dbReference type="InterPro" id="IPR034819">
    <property type="entry name" value="CPEB"/>
</dbReference>
<dbReference type="InterPro" id="IPR012677">
    <property type="entry name" value="Nucleotide-bd_a/b_plait_sf"/>
</dbReference>
<dbReference type="InterPro" id="IPR035979">
    <property type="entry name" value="RBD_domain_sf"/>
</dbReference>
<dbReference type="InterPro" id="IPR000504">
    <property type="entry name" value="RRM_dom"/>
</dbReference>
<dbReference type="PANTHER" id="PTHR12566">
    <property type="entry name" value="CYTOPLASMIC POLYADENYLATION ELEMENT BINDING PROTEIN CPEB"/>
    <property type="match status" value="1"/>
</dbReference>
<dbReference type="PANTHER" id="PTHR12566:SF7">
    <property type="entry name" value="CYTOPLASMIC POLYADENYLATION ELEMENT-BINDING PROTEIN 3"/>
    <property type="match status" value="1"/>
</dbReference>
<dbReference type="Pfam" id="PF16366">
    <property type="entry name" value="CEBP_ZZ"/>
    <property type="match status" value="1"/>
</dbReference>
<dbReference type="Pfam" id="PF16367">
    <property type="entry name" value="RRM_7"/>
    <property type="match status" value="1"/>
</dbReference>
<dbReference type="SMART" id="SM00360">
    <property type="entry name" value="RRM"/>
    <property type="match status" value="2"/>
</dbReference>
<dbReference type="SUPFAM" id="SSF54928">
    <property type="entry name" value="RNA-binding domain, RBD"/>
    <property type="match status" value="1"/>
</dbReference>
<dbReference type="PROSITE" id="PS50102">
    <property type="entry name" value="RRM"/>
    <property type="match status" value="2"/>
</dbReference>
<organism>
    <name type="scientific">Xenopus tropicalis</name>
    <name type="common">Western clawed frog</name>
    <name type="synonym">Silurana tropicalis</name>
    <dbReference type="NCBI Taxonomy" id="8364"/>
    <lineage>
        <taxon>Eukaryota</taxon>
        <taxon>Metazoa</taxon>
        <taxon>Chordata</taxon>
        <taxon>Craniata</taxon>
        <taxon>Vertebrata</taxon>
        <taxon>Euteleostomi</taxon>
        <taxon>Amphibia</taxon>
        <taxon>Batrachia</taxon>
        <taxon>Anura</taxon>
        <taxon>Pipoidea</taxon>
        <taxon>Pipidae</taxon>
        <taxon>Xenopodinae</taxon>
        <taxon>Xenopus</taxon>
        <taxon>Silurana</taxon>
    </lineage>
</organism>
<sequence>MQDDLLMDKSKAQQRQQPQQPPSSQTQQQQKEAASVAEPPSSRESSPPTHKDKMQMESPLLPGLSFQQEPPTTPSLSPSFGSTWSTGGSNSAVDDSFFPGITPVNGTMLFQNFPHHHHVNPVFGGTFSPQMGLAHQTQQQQRRSPASPNNHTAYTQRNAYSHQPILTNKPSSSPNSSSPSPSNWNNQQNAAWNTPSNPWGAMQPGRDPRRAVGVGVGVGVGVPSPLNPISPLKKTFSSNVIAPPKFSRASPLTPKSWVEDNAFRTDNGNTLLPLQDRNRPYDSFNLHTLENSLMDMIRTDHEPLKARMGLNFHHPGTDNIMALNTRSYGRRRGRSSLFPFEDGFLGDGHGDQSLSSGLSSPTHCQNGERIERYSRKVFVGGLPPDIDEDEITASFRRFGPLVVDWPHKAESKSYFPPKGYAFLLFQEESSVQALIDACLEEDGKLYLCVSSPTIKDKPVQIRPWNLSDSDFVMDGSQPLDPRKTIFVGGVPRPLRAVELAMIMDRLYGGVCYAGIDTDPELKYPKGAGRVAFSNQQSYIAAISARFVQLQHNDIDKRVEVKPYVLDDQMCDECQGTRCGGKFAPFFCANVTCLQYYCEYCWASIHSRAGREFHKPLVKEGGDRPRHVPFHWS</sequence>
<reference key="1">
    <citation type="submission" date="2006-06" db="EMBL/GenBank/DDBJ databases">
        <authorList>
            <consortium name="Sanger Xenopus tropicalis EST/cDNA project"/>
        </authorList>
    </citation>
    <scope>NUCLEOTIDE SEQUENCE [LARGE SCALE MRNA]</scope>
    <source>
        <tissue>Gastrula</tissue>
    </source>
</reference>
<reference key="2">
    <citation type="journal article" date="2008" name="Mech. Dev.">
        <title>A functional screen for genes involved in Xenopus pronephros development.</title>
        <authorList>
            <person name="Kyuno J."/>
            <person name="Masse K."/>
            <person name="Jones E.A."/>
        </authorList>
    </citation>
    <scope>FUNCTION</scope>
    <scope>TISSUE SPECIFICITY</scope>
</reference>
<protein>
    <recommendedName>
        <fullName>Cytoplasmic polyadenylation element-binding protein 3</fullName>
        <shortName>CPE-BP3</shortName>
        <shortName>CPE-binding protein 3</shortName>
        <shortName>CPEB-3</shortName>
    </recommendedName>
</protein>
<accession>Q28CH2</accession>
<feature type="chain" id="PRO_0000269263" description="Cytoplasmic polyadenylation element-binding protein 3">
    <location>
        <begin position="1"/>
        <end position="632"/>
    </location>
</feature>
<feature type="domain" description="RRM 1" evidence="2">
    <location>
        <begin position="375"/>
        <end position="466"/>
    </location>
</feature>
<feature type="domain" description="RRM 2" evidence="2">
    <location>
        <begin position="483"/>
        <end position="565"/>
    </location>
</feature>
<feature type="region of interest" description="Disordered" evidence="3">
    <location>
        <begin position="1"/>
        <end position="89"/>
    </location>
</feature>
<feature type="region of interest" description="Disordered" evidence="3">
    <location>
        <begin position="127"/>
        <end position="212"/>
    </location>
</feature>
<feature type="compositionally biased region" description="Basic and acidic residues" evidence="3">
    <location>
        <begin position="1"/>
        <end position="11"/>
    </location>
</feature>
<feature type="compositionally biased region" description="Low complexity" evidence="3">
    <location>
        <begin position="13"/>
        <end position="48"/>
    </location>
</feature>
<feature type="compositionally biased region" description="Polar residues" evidence="3">
    <location>
        <begin position="65"/>
        <end position="89"/>
    </location>
</feature>
<feature type="compositionally biased region" description="Polar residues" evidence="3">
    <location>
        <begin position="135"/>
        <end position="169"/>
    </location>
</feature>
<feature type="compositionally biased region" description="Low complexity" evidence="3">
    <location>
        <begin position="170"/>
        <end position="193"/>
    </location>
</feature>
<keyword id="KW-0010">Activator</keyword>
<keyword id="KW-0966">Cell projection</keyword>
<keyword id="KW-0963">Cytoplasm</keyword>
<keyword id="KW-0217">Developmental protein</keyword>
<keyword id="KW-0221">Differentiation</keyword>
<keyword id="KW-0539">Nucleus</keyword>
<keyword id="KW-1185">Reference proteome</keyword>
<keyword id="KW-0677">Repeat</keyword>
<keyword id="KW-0678">Repressor</keyword>
<keyword id="KW-0694">RNA-binding</keyword>
<keyword id="KW-0770">Synapse</keyword>
<evidence type="ECO:0000250" key="1">
    <source>
        <dbReference type="UniProtKB" id="Q7TN99"/>
    </source>
</evidence>
<evidence type="ECO:0000255" key="2">
    <source>
        <dbReference type="PROSITE-ProRule" id="PRU00176"/>
    </source>
</evidence>
<evidence type="ECO:0000256" key="3">
    <source>
        <dbReference type="SAM" id="MobiDB-lite"/>
    </source>
</evidence>
<evidence type="ECO:0000269" key="4">
    <source>
    </source>
</evidence>
<evidence type="ECO:0000305" key="5"/>
<name>CPEB3_XENTR</name>